<reference key="1">
    <citation type="submission" date="2002-08" db="EMBL/GenBank/DDBJ databases">
        <title>Genes from major histocompatibility complex (MHC) class I region from HLA-C to HLA-A.</title>
        <authorList>
            <person name="Raha-Chowdhury R."/>
            <person name="Andrews S.R."/>
            <person name="Gruen J.R."/>
            <person name="Weissman S.M."/>
        </authorList>
    </citation>
    <scope>NUCLEOTIDE SEQUENCE [MRNA]</scope>
    <source>
        <strain>C57BL/6J</strain>
        <tissue>Spleen</tissue>
    </source>
</reference>
<dbReference type="EMBL" id="AJ504719">
    <property type="protein sequence ID" value="CAD44295.1"/>
    <property type="molecule type" value="mRNA"/>
</dbReference>
<dbReference type="CCDS" id="CCDS28714.1"/>
<dbReference type="RefSeq" id="NP_001159364.1">
    <property type="nucleotide sequence ID" value="NM_001165892.1"/>
</dbReference>
<dbReference type="RefSeq" id="NP_001268941.1">
    <property type="nucleotide sequence ID" value="NM_001282012.1"/>
</dbReference>
<dbReference type="RefSeq" id="NP_001268942.1">
    <property type="nucleotide sequence ID" value="NM_001282013.1"/>
</dbReference>
<dbReference type="RefSeq" id="NP_001268953.1">
    <property type="nucleotide sequence ID" value="NM_001282024.1"/>
</dbReference>
<dbReference type="RefSeq" id="NP_001371043.1">
    <property type="nucleotide sequence ID" value="NM_001384114.1"/>
</dbReference>
<dbReference type="RefSeq" id="NP_663462.2">
    <property type="nucleotide sequence ID" value="NM_145487.3"/>
</dbReference>
<dbReference type="RefSeq" id="XP_006525126.1">
    <property type="nucleotide sequence ID" value="XM_006525063.2"/>
</dbReference>
<dbReference type="BioGRID" id="217305">
    <property type="interactions" value="1"/>
</dbReference>
<dbReference type="FunCoup" id="Q811B5">
    <property type="interactions" value="137"/>
</dbReference>
<dbReference type="STRING" id="10090.ENSMUSP00000052166"/>
<dbReference type="iPTMnet" id="Q811B5"/>
<dbReference type="PhosphoSitePlus" id="Q811B5"/>
<dbReference type="PaxDb" id="10090-ENSMUSP00000052166"/>
<dbReference type="ProteomicsDB" id="291819"/>
<dbReference type="Antibodypedia" id="67374">
    <property type="antibodies" value="29 antibodies from 8 providers"/>
</dbReference>
<dbReference type="Ensembl" id="ENSMUST00000055454.14">
    <property type="protein sequence ID" value="ENSMUSP00000052166.8"/>
    <property type="gene ID" value="ENSMUSG00000038500.16"/>
</dbReference>
<dbReference type="GeneID" id="75210"/>
<dbReference type="KEGG" id="mmu:75210"/>
<dbReference type="UCSC" id="uc008cjl.2">
    <property type="organism name" value="mouse"/>
</dbReference>
<dbReference type="AGR" id="MGI:1922460"/>
<dbReference type="CTD" id="80742"/>
<dbReference type="MGI" id="MGI:1922460">
    <property type="gene designation" value="Prr3"/>
</dbReference>
<dbReference type="VEuPathDB" id="HostDB:ENSMUSG00000038500"/>
<dbReference type="eggNOG" id="ENOG502TAPB">
    <property type="taxonomic scope" value="Eukaryota"/>
</dbReference>
<dbReference type="GeneTree" id="ENSGT00940000161804"/>
<dbReference type="InParanoid" id="Q811B5"/>
<dbReference type="OMA" id="GHGWWGV"/>
<dbReference type="OrthoDB" id="9837419at2759"/>
<dbReference type="PhylomeDB" id="Q811B5"/>
<dbReference type="TreeFam" id="TF337284"/>
<dbReference type="BioGRID-ORCS" id="75210">
    <property type="hits" value="2 hits in 76 CRISPR screens"/>
</dbReference>
<dbReference type="PRO" id="PR:Q811B5"/>
<dbReference type="Proteomes" id="UP000000589">
    <property type="component" value="Chromosome 17"/>
</dbReference>
<dbReference type="RNAct" id="Q811B5">
    <property type="molecule type" value="protein"/>
</dbReference>
<dbReference type="Bgee" id="ENSMUSG00000038500">
    <property type="expression patterns" value="Expressed in floor plate of midbrain and 217 other cell types or tissues"/>
</dbReference>
<dbReference type="ExpressionAtlas" id="Q811B5">
    <property type="expression patterns" value="baseline and differential"/>
</dbReference>
<dbReference type="GO" id="GO:0008270">
    <property type="term" value="F:zinc ion binding"/>
    <property type="evidence" value="ECO:0007669"/>
    <property type="project" value="UniProtKB-KW"/>
</dbReference>
<dbReference type="Gene3D" id="4.10.1000.10">
    <property type="entry name" value="Zinc finger, CCCH-type"/>
    <property type="match status" value="1"/>
</dbReference>
<dbReference type="InterPro" id="IPR042805">
    <property type="entry name" value="PRR3"/>
</dbReference>
<dbReference type="InterPro" id="IPR000571">
    <property type="entry name" value="Znf_CCCH"/>
</dbReference>
<dbReference type="InterPro" id="IPR036855">
    <property type="entry name" value="Znf_CCCH_sf"/>
</dbReference>
<dbReference type="PANTHER" id="PTHR47398">
    <property type="entry name" value="PROLINE-RICH PROTEIN 3"/>
    <property type="match status" value="1"/>
</dbReference>
<dbReference type="PANTHER" id="PTHR47398:SF1">
    <property type="entry name" value="PROLINE-RICH PROTEIN 3-RELATED"/>
    <property type="match status" value="1"/>
</dbReference>
<dbReference type="Pfam" id="PF00642">
    <property type="entry name" value="zf-CCCH"/>
    <property type="match status" value="1"/>
</dbReference>
<dbReference type="SMART" id="SM00356">
    <property type="entry name" value="ZnF_C3H1"/>
    <property type="match status" value="1"/>
</dbReference>
<dbReference type="SUPFAM" id="SSF90229">
    <property type="entry name" value="CCCH zinc finger"/>
    <property type="match status" value="1"/>
</dbReference>
<dbReference type="PROSITE" id="PS50103">
    <property type="entry name" value="ZF_C3H1"/>
    <property type="match status" value="1"/>
</dbReference>
<gene>
    <name type="primary">Prr3</name>
    <name type="synonym">Cat56</name>
</gene>
<name>PRR3_MOUSE</name>
<accession>Q811B5</accession>
<accession>Q91YI5</accession>
<keyword id="KW-0479">Metal-binding</keyword>
<keyword id="KW-1185">Reference proteome</keyword>
<keyword id="KW-0862">Zinc</keyword>
<keyword id="KW-0863">Zinc-finger</keyword>
<proteinExistence type="evidence at transcript level"/>
<feature type="chain" id="PRO_0000213890" description="Proline-rich protein 3">
    <location>
        <begin position="1"/>
        <end position="190"/>
    </location>
</feature>
<feature type="zinc finger region" description="C3H1-type" evidence="1">
    <location>
        <begin position="157"/>
        <end position="185"/>
    </location>
</feature>
<feature type="region of interest" description="Disordered" evidence="2">
    <location>
        <begin position="1"/>
        <end position="94"/>
    </location>
</feature>
<feature type="region of interest" description="Disordered" evidence="2">
    <location>
        <begin position="110"/>
        <end position="130"/>
    </location>
</feature>
<feature type="region of interest" description="Disordered" evidence="2">
    <location>
        <begin position="142"/>
        <end position="161"/>
    </location>
</feature>
<feature type="compositionally biased region" description="Pro residues" evidence="2">
    <location>
        <begin position="37"/>
        <end position="48"/>
    </location>
</feature>
<evidence type="ECO:0000255" key="1">
    <source>
        <dbReference type="PROSITE-ProRule" id="PRU00723"/>
    </source>
</evidence>
<evidence type="ECO:0000256" key="2">
    <source>
        <dbReference type="SAM" id="MobiDB-lite"/>
    </source>
</evidence>
<sequence length="190" mass="21167">MPKRKKQDQPPPLPQQQQHLALSERDEPGDEEDERPMGPPSLLGPPPMANGKPGDPKSAFHRGPPGSRGRMIPPLLSLPPPPRGRGYIRGGLGPRSSPYGRGWWGINAEPPFPGPGHGGPSRESFYKEARNPRRLRSWSLVKNTYPPKDSPQMMEDKSDRPVCRHFSKKGHCRYEDHCAFYHPGVNGPPL</sequence>
<organism>
    <name type="scientific">Mus musculus</name>
    <name type="common">Mouse</name>
    <dbReference type="NCBI Taxonomy" id="10090"/>
    <lineage>
        <taxon>Eukaryota</taxon>
        <taxon>Metazoa</taxon>
        <taxon>Chordata</taxon>
        <taxon>Craniata</taxon>
        <taxon>Vertebrata</taxon>
        <taxon>Euteleostomi</taxon>
        <taxon>Mammalia</taxon>
        <taxon>Eutheria</taxon>
        <taxon>Euarchontoglires</taxon>
        <taxon>Glires</taxon>
        <taxon>Rodentia</taxon>
        <taxon>Myomorpha</taxon>
        <taxon>Muroidea</taxon>
        <taxon>Muridae</taxon>
        <taxon>Murinae</taxon>
        <taxon>Mus</taxon>
        <taxon>Mus</taxon>
    </lineage>
</organism>
<protein>
    <recommendedName>
        <fullName>Proline-rich protein 3</fullName>
    </recommendedName>
    <alternativeName>
        <fullName>MHC class I region proline-rich protein CAT56</fullName>
    </alternativeName>
</protein>